<sequence>MQALYDVPAPAKLNLFLHVTGRRPDGYHLLQSVFMLIDWCDVLHFEVRGNGTVTREDLTSALPADDLVVRAARALQKATGCPQGVHIGVSKHIPAQAGLGGGSSDAASTLLALNRLWKLKLSRQQLHSIALTLGADVPFFLCGASAWVEGIGDIIRRLELEHQLPPAAFAVVKPEAGLDTRMIFSHPSLKRDSSCATISGFAATHYQFGSNDLQPVAQALCPEITQAINWLESKGLQGRMTGSGSAVFAQITHAVDLHDAPAAWHVKVCENLKSHPLADWVFG</sequence>
<evidence type="ECO:0000255" key="1">
    <source>
        <dbReference type="HAMAP-Rule" id="MF_00061"/>
    </source>
</evidence>
<name>ISPE_ACIET</name>
<comment type="function">
    <text evidence="1">Catalyzes the phosphorylation of the position 2 hydroxy group of 4-diphosphocytidyl-2C-methyl-D-erythritol.</text>
</comment>
<comment type="catalytic activity">
    <reaction evidence="1">
        <text>4-CDP-2-C-methyl-D-erythritol + ATP = 4-CDP-2-C-methyl-D-erythritol 2-phosphate + ADP + H(+)</text>
        <dbReference type="Rhea" id="RHEA:18437"/>
        <dbReference type="ChEBI" id="CHEBI:15378"/>
        <dbReference type="ChEBI" id="CHEBI:30616"/>
        <dbReference type="ChEBI" id="CHEBI:57823"/>
        <dbReference type="ChEBI" id="CHEBI:57919"/>
        <dbReference type="ChEBI" id="CHEBI:456216"/>
        <dbReference type="EC" id="2.7.1.148"/>
    </reaction>
</comment>
<comment type="pathway">
    <text evidence="1">Isoprenoid biosynthesis; isopentenyl diphosphate biosynthesis via DXP pathway; isopentenyl diphosphate from 1-deoxy-D-xylulose 5-phosphate: step 3/6.</text>
</comment>
<comment type="similarity">
    <text evidence="1">Belongs to the GHMP kinase family. IspE subfamily.</text>
</comment>
<gene>
    <name evidence="1" type="primary">ispE</name>
    <name type="ordered locus">Dtpsy_0825</name>
</gene>
<reference key="1">
    <citation type="submission" date="2009-01" db="EMBL/GenBank/DDBJ databases">
        <title>Complete sequence of Diaphorobacter sp. TPSY.</title>
        <authorList>
            <consortium name="US DOE Joint Genome Institute"/>
            <person name="Lucas S."/>
            <person name="Copeland A."/>
            <person name="Lapidus A."/>
            <person name="Glavina del Rio T."/>
            <person name="Tice H."/>
            <person name="Bruce D."/>
            <person name="Goodwin L."/>
            <person name="Pitluck S."/>
            <person name="Chertkov O."/>
            <person name="Brettin T."/>
            <person name="Detter J.C."/>
            <person name="Han C."/>
            <person name="Larimer F."/>
            <person name="Land M."/>
            <person name="Hauser L."/>
            <person name="Kyrpides N."/>
            <person name="Mikhailova N."/>
            <person name="Coates J.D."/>
        </authorList>
    </citation>
    <scope>NUCLEOTIDE SEQUENCE [LARGE SCALE GENOMIC DNA]</scope>
    <source>
        <strain>TPSY</strain>
    </source>
</reference>
<feature type="chain" id="PRO_1000190685" description="4-diphosphocytidyl-2-C-methyl-D-erythritol kinase">
    <location>
        <begin position="1"/>
        <end position="283"/>
    </location>
</feature>
<feature type="active site" evidence="1">
    <location>
        <position position="12"/>
    </location>
</feature>
<feature type="active site" evidence="1">
    <location>
        <position position="136"/>
    </location>
</feature>
<feature type="binding site" evidence="1">
    <location>
        <begin position="94"/>
        <end position="104"/>
    </location>
    <ligand>
        <name>ATP</name>
        <dbReference type="ChEBI" id="CHEBI:30616"/>
    </ligand>
</feature>
<organism>
    <name type="scientific">Acidovorax ebreus (strain TPSY)</name>
    <name type="common">Diaphorobacter sp. (strain TPSY)</name>
    <dbReference type="NCBI Taxonomy" id="535289"/>
    <lineage>
        <taxon>Bacteria</taxon>
        <taxon>Pseudomonadati</taxon>
        <taxon>Pseudomonadota</taxon>
        <taxon>Betaproteobacteria</taxon>
        <taxon>Burkholderiales</taxon>
        <taxon>Comamonadaceae</taxon>
        <taxon>Diaphorobacter</taxon>
    </lineage>
</organism>
<keyword id="KW-0067">ATP-binding</keyword>
<keyword id="KW-0414">Isoprene biosynthesis</keyword>
<keyword id="KW-0418">Kinase</keyword>
<keyword id="KW-0547">Nucleotide-binding</keyword>
<keyword id="KW-1185">Reference proteome</keyword>
<keyword id="KW-0808">Transferase</keyword>
<dbReference type="EC" id="2.7.1.148" evidence="1"/>
<dbReference type="EMBL" id="CP001392">
    <property type="protein sequence ID" value="ACM32303.1"/>
    <property type="molecule type" value="Genomic_DNA"/>
</dbReference>
<dbReference type="RefSeq" id="WP_012655795.1">
    <property type="nucleotide sequence ID" value="NC_011992.1"/>
</dbReference>
<dbReference type="SMR" id="B9ME49"/>
<dbReference type="KEGG" id="dia:Dtpsy_0825"/>
<dbReference type="eggNOG" id="COG1947">
    <property type="taxonomic scope" value="Bacteria"/>
</dbReference>
<dbReference type="HOGENOM" id="CLU_053057_3_0_4"/>
<dbReference type="UniPathway" id="UPA00056">
    <property type="reaction ID" value="UER00094"/>
</dbReference>
<dbReference type="Proteomes" id="UP000000450">
    <property type="component" value="Chromosome"/>
</dbReference>
<dbReference type="GO" id="GO:0050515">
    <property type="term" value="F:4-(cytidine 5'-diphospho)-2-C-methyl-D-erythritol kinase activity"/>
    <property type="evidence" value="ECO:0007669"/>
    <property type="project" value="UniProtKB-UniRule"/>
</dbReference>
<dbReference type="GO" id="GO:0005524">
    <property type="term" value="F:ATP binding"/>
    <property type="evidence" value="ECO:0007669"/>
    <property type="project" value="UniProtKB-UniRule"/>
</dbReference>
<dbReference type="GO" id="GO:0019288">
    <property type="term" value="P:isopentenyl diphosphate biosynthetic process, methylerythritol 4-phosphate pathway"/>
    <property type="evidence" value="ECO:0007669"/>
    <property type="project" value="UniProtKB-UniRule"/>
</dbReference>
<dbReference type="GO" id="GO:0016114">
    <property type="term" value="P:terpenoid biosynthetic process"/>
    <property type="evidence" value="ECO:0007669"/>
    <property type="project" value="InterPro"/>
</dbReference>
<dbReference type="Gene3D" id="3.30.230.10">
    <property type="match status" value="1"/>
</dbReference>
<dbReference type="Gene3D" id="3.30.70.890">
    <property type="entry name" value="GHMP kinase, C-terminal domain"/>
    <property type="match status" value="1"/>
</dbReference>
<dbReference type="HAMAP" id="MF_00061">
    <property type="entry name" value="IspE"/>
    <property type="match status" value="1"/>
</dbReference>
<dbReference type="InterPro" id="IPR013750">
    <property type="entry name" value="GHMP_kinase_C_dom"/>
</dbReference>
<dbReference type="InterPro" id="IPR036554">
    <property type="entry name" value="GHMP_kinase_C_sf"/>
</dbReference>
<dbReference type="InterPro" id="IPR006204">
    <property type="entry name" value="GHMP_kinase_N_dom"/>
</dbReference>
<dbReference type="InterPro" id="IPR004424">
    <property type="entry name" value="IspE"/>
</dbReference>
<dbReference type="InterPro" id="IPR020568">
    <property type="entry name" value="Ribosomal_Su5_D2-typ_SF"/>
</dbReference>
<dbReference type="InterPro" id="IPR014721">
    <property type="entry name" value="Ribsml_uS5_D2-typ_fold_subgr"/>
</dbReference>
<dbReference type="NCBIfam" id="TIGR00154">
    <property type="entry name" value="ispE"/>
    <property type="match status" value="1"/>
</dbReference>
<dbReference type="PANTHER" id="PTHR43527">
    <property type="entry name" value="4-DIPHOSPHOCYTIDYL-2-C-METHYL-D-ERYTHRITOL KINASE, CHLOROPLASTIC"/>
    <property type="match status" value="1"/>
</dbReference>
<dbReference type="PANTHER" id="PTHR43527:SF2">
    <property type="entry name" value="4-DIPHOSPHOCYTIDYL-2-C-METHYL-D-ERYTHRITOL KINASE, CHLOROPLASTIC"/>
    <property type="match status" value="1"/>
</dbReference>
<dbReference type="Pfam" id="PF08544">
    <property type="entry name" value="GHMP_kinases_C"/>
    <property type="match status" value="1"/>
</dbReference>
<dbReference type="Pfam" id="PF00288">
    <property type="entry name" value="GHMP_kinases_N"/>
    <property type="match status" value="1"/>
</dbReference>
<dbReference type="PIRSF" id="PIRSF010376">
    <property type="entry name" value="IspE"/>
    <property type="match status" value="1"/>
</dbReference>
<dbReference type="SUPFAM" id="SSF55060">
    <property type="entry name" value="GHMP Kinase, C-terminal domain"/>
    <property type="match status" value="1"/>
</dbReference>
<dbReference type="SUPFAM" id="SSF54211">
    <property type="entry name" value="Ribosomal protein S5 domain 2-like"/>
    <property type="match status" value="1"/>
</dbReference>
<proteinExistence type="inferred from homology"/>
<protein>
    <recommendedName>
        <fullName evidence="1">4-diphosphocytidyl-2-C-methyl-D-erythritol kinase</fullName>
        <shortName evidence="1">CMK</shortName>
        <ecNumber evidence="1">2.7.1.148</ecNumber>
    </recommendedName>
    <alternativeName>
        <fullName evidence="1">4-(cytidine-5'-diphospho)-2-C-methyl-D-erythritol kinase</fullName>
    </alternativeName>
</protein>
<accession>B9ME49</accession>